<organism>
    <name type="scientific">Deinococcus radiodurans (strain ATCC 13939 / DSM 20539 / JCM 16871 / CCUG 27074 / LMG 4051 / NBRC 15346 / NCIMB 9279 / VKM B-1422 / R1)</name>
    <dbReference type="NCBI Taxonomy" id="243230"/>
    <lineage>
        <taxon>Bacteria</taxon>
        <taxon>Thermotogati</taxon>
        <taxon>Deinococcota</taxon>
        <taxon>Deinococci</taxon>
        <taxon>Deinococcales</taxon>
        <taxon>Deinococcaceae</taxon>
        <taxon>Deinococcus</taxon>
    </lineage>
</organism>
<reference key="1">
    <citation type="journal article" date="1999" name="Science">
        <title>Genome sequence of the radioresistant bacterium Deinococcus radiodurans R1.</title>
        <authorList>
            <person name="White O."/>
            <person name="Eisen J.A."/>
            <person name="Heidelberg J.F."/>
            <person name="Hickey E.K."/>
            <person name="Peterson J.D."/>
            <person name="Dodson R.J."/>
            <person name="Haft D.H."/>
            <person name="Gwinn M.L."/>
            <person name="Nelson W.C."/>
            <person name="Richardson D.L."/>
            <person name="Moffat K.S."/>
            <person name="Qin H."/>
            <person name="Jiang L."/>
            <person name="Pamphile W."/>
            <person name="Crosby M."/>
            <person name="Shen M."/>
            <person name="Vamathevan J.J."/>
            <person name="Lam P."/>
            <person name="McDonald L.A."/>
            <person name="Utterback T.R."/>
            <person name="Zalewski C."/>
            <person name="Makarova K.S."/>
            <person name="Aravind L."/>
            <person name="Daly M.J."/>
            <person name="Minton K.W."/>
            <person name="Fleischmann R.D."/>
            <person name="Ketchum K.A."/>
            <person name="Nelson K.E."/>
            <person name="Salzberg S.L."/>
            <person name="Smith H.O."/>
            <person name="Venter J.C."/>
            <person name="Fraser C.M."/>
        </authorList>
    </citation>
    <scope>NUCLEOTIDE SEQUENCE [LARGE SCALE GENOMIC DNA]</scope>
    <source>
        <strain>ATCC 13939 / DSM 20539 / JCM 16871 / CCUG 27074 / LMG 4051 / NBRC 15346 / NCIMB 9279 / VKM B-1422 / R1</strain>
    </source>
</reference>
<reference key="2">
    <citation type="journal article" date="2001" name="Cell">
        <title>High resolution structure of the large ribosomal subunit from a mesophilic eubacterium.</title>
        <authorList>
            <person name="Harms J."/>
            <person name="Schluenzen F."/>
            <person name="Zarivach R."/>
            <person name="Bashan A."/>
            <person name="Gat S."/>
            <person name="Agmon I."/>
            <person name="Bartels H."/>
            <person name="Franceschi F."/>
            <person name="Yonath A."/>
        </authorList>
    </citation>
    <scope>X-RAY CRYSTALLOGRAPHY (3.1 ANGSTROMS) OF THE 50S SUBUNIT</scope>
    <scope>PROTEIN SEQUENCE OF 1-5</scope>
    <source>
        <strain>ATCC 13939 / DSM 20539 / JCM 16871 / CCUG 27074 / LMG 4051 / NBRC 15346 / NCIMB 9279 / VKM B-1422 / R1</strain>
    </source>
</reference>
<reference key="3">
    <citation type="journal article" date="2001" name="Nature">
        <title>Structural basis for the interaction of antibiotics with the peptidyl transferase centre in eubacteria.</title>
        <authorList>
            <person name="Schluenzen F."/>
            <person name="Zarivach R."/>
            <person name="Harms J."/>
            <person name="Bashan A."/>
            <person name="Tocilj A."/>
            <person name="Albrecht R."/>
            <person name="Yonath A."/>
            <person name="Franceschi F."/>
        </authorList>
    </citation>
    <scope>X-RAY CRYSTALLOGRAPHY (3.1 ANGSTROMS) OF THE 50S SUBUNIT IN COMPLEX WITH FIVE ANTIBIOTICS</scope>
    <source>
        <strain>ATCC 13939 / DSM 20539 / JCM 16871 / CCUG 27074 / LMG 4051 / NBRC 15346 / NCIMB 9279 / VKM B-1422 / R1</strain>
    </source>
</reference>
<reference key="4">
    <citation type="journal article" date="2003" name="Mol. Cell">
        <title>Structural basis of the ribosomal machinery for peptide bond formation, translocation, and nascent chain progression.</title>
        <authorList>
            <person name="Bashan A."/>
            <person name="Agmon I."/>
            <person name="Zarivach R."/>
            <person name="Schluenzen F."/>
            <person name="Harms J."/>
            <person name="Berisio R."/>
            <person name="Bartels H."/>
            <person name="Franceschi F."/>
            <person name="Auerbach T."/>
            <person name="Hansen H.A."/>
            <person name="Kossoy E."/>
            <person name="Kessler M."/>
            <person name="Yonath A."/>
        </authorList>
    </citation>
    <scope>X-RAY CRYSTALLOGRAPHY (3.5 ANGSTROMS) OF THE 50S SUBUNIT IN COMPLEX WITH TRNA MIMICS</scope>
    <source>
        <strain>ATCC 13939 / DSM 20539 / JCM 16871 / CCUG 27074 / LMG 4051 / NBRC 15346 / NCIMB 9279 / VKM B-1422 / R1</strain>
    </source>
</reference>
<reference key="5">
    <citation type="journal article" date="2003" name="Structure">
        <title>Structural basis for the antibiotic activity of ketolides and azalides.</title>
        <authorList>
            <person name="Schluenzen F."/>
            <person name="Harms J.M."/>
            <person name="Franceschi F."/>
            <person name="Hansen H.A."/>
            <person name="Bartels H."/>
            <person name="Zarivach R."/>
            <person name="Yonath A."/>
        </authorList>
    </citation>
    <scope>X-RAY CRYSTALLOGRAPHY (3.3 ANGSTROMS) OF THE 50S SUBUNIT IN COMPLEX WITH MODIFIED MACROLIDE ANTIBIOTICS</scope>
    <source>
        <strain>ATCC 13939 / DSM 20539 / JCM 16871 / CCUG 27074 / LMG 4051 / NBRC 15346 / NCIMB 9279 / VKM B-1422 / R1</strain>
    </source>
</reference>
<reference key="6">
    <citation type="journal article" date="2003" name="Nat. Struct. Biol.">
        <title>Structural insight into the role of the ribosomal tunnel in cellular regulation.</title>
        <authorList>
            <person name="Berisio R."/>
            <person name="Schluenzen F."/>
            <person name="Harms J."/>
            <person name="Bashan A."/>
            <person name="Auerbach T."/>
            <person name="Baram D."/>
            <person name="Yonath A."/>
        </authorList>
    </citation>
    <scope>X-RAY CRYSTALLOGRAPHY (3.4 ANGSTROMS) OF THE 50S SUBUNIT IN COMPLEX WITH TROLEANDOMYCIN</scope>
    <source>
        <strain>ATCC 13939 / DSM 20539 / JCM 16871 / CCUG 27074 / LMG 4051 / NBRC 15346 / NCIMB 9279 / VKM B-1422 / R1</strain>
    </source>
</reference>
<reference key="7">
    <citation type="journal article" date="2004" name="BMC Biol.">
        <title>Alterations at the peptidyl transferase centre of the ribosome induced by the synergistic action of the streptogramins dalfopristin and quinupristin.</title>
        <authorList>
            <person name="Harms J.M."/>
            <person name="Schluenzen F."/>
            <person name="Fucini P."/>
            <person name="Bartels H."/>
            <person name="Yonath A."/>
        </authorList>
    </citation>
    <scope>X-RAY CRYSTALLOGRAPHY (3.4 ANGSTROMS) OF THE 50S SUBUNIT IN COMPLEX WITH THE STREPTOGRAMINS QUINUPRISTIN AND DALFOPRISTIN</scope>
    <source>
        <strain>ATCC 13939 / DSM 20539 / JCM 16871 / CCUG 27074 / LMG 4051 / NBRC 15346 / NCIMB 9279 / VKM B-1422 / R1</strain>
    </source>
</reference>
<reference key="8">
    <citation type="journal article" date="2004" name="Mol. Microbiol.">
        <title>Inhibition of peptide bond formation by pleuromutilins: the structure of the 50S ribosomal subunit from Deinococcus radiodurans in complex with tiamulin.</title>
        <authorList>
            <person name="Schluenzen F."/>
            <person name="Pyetan E."/>
            <person name="Fucini P."/>
            <person name="Yonath A."/>
            <person name="Harms J.M."/>
        </authorList>
    </citation>
    <scope>X-RAY CRYSTALLOGRAPHY (3.5 ANGSTROMS) OF THE 50S SUBUNIT IN COMPLEX WITH TIAMULIN</scope>
    <source>
        <strain>ATCC 13939 / DSM 20539 / JCM 16871 / CCUG 27074 / LMG 4051 / NBRC 15346 / NCIMB 9279 / VKM B-1422 / R1</strain>
    </source>
</reference>
<name>RL9_DEIRA</name>
<dbReference type="EMBL" id="AE000513">
    <property type="protein sequence ID" value="AAF09694.1"/>
    <property type="molecule type" value="Genomic_DNA"/>
</dbReference>
<dbReference type="PIR" id="C75559">
    <property type="entry name" value="C75559"/>
</dbReference>
<dbReference type="RefSeq" id="NP_293828.1">
    <property type="nucleotide sequence ID" value="NC_001263.1"/>
</dbReference>
<dbReference type="RefSeq" id="WP_010886750.1">
    <property type="nucleotide sequence ID" value="NC_001263.1"/>
</dbReference>
<dbReference type="PDB" id="1NKW">
    <property type="method" value="X-ray"/>
    <property type="resolution" value="3.10 A"/>
    <property type="chains" value="F=1-146"/>
</dbReference>
<dbReference type="PDB" id="1NWX">
    <property type="method" value="X-ray"/>
    <property type="resolution" value="3.50 A"/>
    <property type="chains" value="F=1-146"/>
</dbReference>
<dbReference type="PDB" id="1NWY">
    <property type="method" value="X-ray"/>
    <property type="resolution" value="3.30 A"/>
    <property type="chains" value="F=1-146"/>
</dbReference>
<dbReference type="PDB" id="1SM1">
    <property type="method" value="X-ray"/>
    <property type="resolution" value="3.42 A"/>
    <property type="chains" value="F=1-146"/>
</dbReference>
<dbReference type="PDB" id="1XBP">
    <property type="method" value="X-ray"/>
    <property type="resolution" value="3.50 A"/>
    <property type="chains" value="F=1-146"/>
</dbReference>
<dbReference type="PDB" id="4V49">
    <property type="method" value="X-ray"/>
    <property type="resolution" value="8.70 A"/>
    <property type="chains" value="F=1-52"/>
</dbReference>
<dbReference type="PDB" id="4V4A">
    <property type="method" value="X-ray"/>
    <property type="resolution" value="9.50 A"/>
    <property type="chains" value="F=1-52"/>
</dbReference>
<dbReference type="PDB" id="4V4G">
    <property type="method" value="X-ray"/>
    <property type="resolution" value="11.50 A"/>
    <property type="chains" value="I=1-52"/>
</dbReference>
<dbReference type="PDBsum" id="1NKW"/>
<dbReference type="PDBsum" id="1NWX"/>
<dbReference type="PDBsum" id="1NWY"/>
<dbReference type="PDBsum" id="1SM1"/>
<dbReference type="PDBsum" id="1XBP"/>
<dbReference type="PDBsum" id="4V49"/>
<dbReference type="PDBsum" id="4V4A"/>
<dbReference type="PDBsum" id="4V4G"/>
<dbReference type="SMR" id="Q9RY49"/>
<dbReference type="FunCoup" id="Q9RY49">
    <property type="interactions" value="512"/>
</dbReference>
<dbReference type="IntAct" id="Q9RY49">
    <property type="interactions" value="1"/>
</dbReference>
<dbReference type="STRING" id="243230.DR_0102"/>
<dbReference type="PaxDb" id="243230-DR_0102"/>
<dbReference type="EnsemblBacteria" id="AAF09694">
    <property type="protein sequence ID" value="AAF09694"/>
    <property type="gene ID" value="DR_0102"/>
</dbReference>
<dbReference type="GeneID" id="69516332"/>
<dbReference type="KEGG" id="dra:DR_0102"/>
<dbReference type="PATRIC" id="fig|243230.17.peg.267"/>
<dbReference type="eggNOG" id="COG0359">
    <property type="taxonomic scope" value="Bacteria"/>
</dbReference>
<dbReference type="HOGENOM" id="CLU_078938_4_1_0"/>
<dbReference type="InParanoid" id="Q9RY49"/>
<dbReference type="OrthoDB" id="9788336at2"/>
<dbReference type="EvolutionaryTrace" id="Q9RY49"/>
<dbReference type="Proteomes" id="UP000002524">
    <property type="component" value="Chromosome 1"/>
</dbReference>
<dbReference type="GO" id="GO:0022625">
    <property type="term" value="C:cytosolic large ribosomal subunit"/>
    <property type="evidence" value="ECO:0000318"/>
    <property type="project" value="GO_Central"/>
</dbReference>
<dbReference type="GO" id="GO:0019843">
    <property type="term" value="F:rRNA binding"/>
    <property type="evidence" value="ECO:0007669"/>
    <property type="project" value="UniProtKB-UniRule"/>
</dbReference>
<dbReference type="GO" id="GO:0003735">
    <property type="term" value="F:structural constituent of ribosome"/>
    <property type="evidence" value="ECO:0007669"/>
    <property type="project" value="InterPro"/>
</dbReference>
<dbReference type="GO" id="GO:0006412">
    <property type="term" value="P:translation"/>
    <property type="evidence" value="ECO:0007669"/>
    <property type="project" value="UniProtKB-UniRule"/>
</dbReference>
<dbReference type="FunFam" id="3.10.430.100:FF:000006">
    <property type="entry name" value="50S ribosomal protein L9"/>
    <property type="match status" value="1"/>
</dbReference>
<dbReference type="Gene3D" id="3.10.430.100">
    <property type="entry name" value="Ribosomal protein L9, C-terminal domain"/>
    <property type="match status" value="1"/>
</dbReference>
<dbReference type="Gene3D" id="3.40.5.10">
    <property type="entry name" value="Ribosomal protein L9, N-terminal domain"/>
    <property type="match status" value="1"/>
</dbReference>
<dbReference type="HAMAP" id="MF_00503">
    <property type="entry name" value="Ribosomal_bL9"/>
    <property type="match status" value="1"/>
</dbReference>
<dbReference type="InterPro" id="IPR000244">
    <property type="entry name" value="Ribosomal_bL9"/>
</dbReference>
<dbReference type="InterPro" id="IPR009027">
    <property type="entry name" value="Ribosomal_bL9/RNase_H1_N"/>
</dbReference>
<dbReference type="InterPro" id="IPR020594">
    <property type="entry name" value="Ribosomal_bL9_bac/chp"/>
</dbReference>
<dbReference type="InterPro" id="IPR020069">
    <property type="entry name" value="Ribosomal_bL9_C"/>
</dbReference>
<dbReference type="InterPro" id="IPR036791">
    <property type="entry name" value="Ribosomal_bL9_C_sf"/>
</dbReference>
<dbReference type="InterPro" id="IPR020070">
    <property type="entry name" value="Ribosomal_bL9_N"/>
</dbReference>
<dbReference type="InterPro" id="IPR036935">
    <property type="entry name" value="Ribosomal_bL9_N_sf"/>
</dbReference>
<dbReference type="NCBIfam" id="TIGR00158">
    <property type="entry name" value="L9"/>
    <property type="match status" value="1"/>
</dbReference>
<dbReference type="PANTHER" id="PTHR21368">
    <property type="entry name" value="50S RIBOSOMAL PROTEIN L9"/>
    <property type="match status" value="1"/>
</dbReference>
<dbReference type="Pfam" id="PF03948">
    <property type="entry name" value="Ribosomal_L9_C"/>
    <property type="match status" value="1"/>
</dbReference>
<dbReference type="Pfam" id="PF01281">
    <property type="entry name" value="Ribosomal_L9_N"/>
    <property type="match status" value="1"/>
</dbReference>
<dbReference type="SUPFAM" id="SSF55658">
    <property type="entry name" value="L9 N-domain-like"/>
    <property type="match status" value="1"/>
</dbReference>
<dbReference type="SUPFAM" id="SSF55653">
    <property type="entry name" value="Ribosomal protein L9 C-domain"/>
    <property type="match status" value="1"/>
</dbReference>
<dbReference type="PROSITE" id="PS00651">
    <property type="entry name" value="RIBOSOMAL_L9"/>
    <property type="match status" value="1"/>
</dbReference>
<evidence type="ECO:0000269" key="1">
    <source>
    </source>
</evidence>
<evidence type="ECO:0000269" key="2">
    <source>
    </source>
</evidence>
<evidence type="ECO:0000269" key="3">
    <source>
    </source>
</evidence>
<evidence type="ECO:0000269" key="4">
    <source>
    </source>
</evidence>
<evidence type="ECO:0000269" key="5">
    <source>
    </source>
</evidence>
<evidence type="ECO:0000269" key="6">
    <source>
    </source>
</evidence>
<evidence type="ECO:0000305" key="7"/>
<sequence length="146" mass="16065">MQVILLEPSRLGKTGEVVSVKDGYARNWLIPQGLAVSATRTNMKTLEAQLRSIEKRQAQEKAVAEDLASRLNGVAVELSVRAGEGKIYGAVTHQDVANSLDQLGFDVDRRKIDMPKTVKEVGEYDIAYRAHPEVTIPMKLVVHAAK</sequence>
<accession>Q9RY49</accession>
<proteinExistence type="evidence at protein level"/>
<comment type="function">
    <text>Binds to the 23S rRNA and protein L31.</text>
</comment>
<comment type="subunit">
    <text evidence="1 2 3 4 5 6">Part of the 50S ribosomal subunit. Contacts protein L31.</text>
</comment>
<comment type="similarity">
    <text evidence="7">Belongs to the bacterial ribosomal protein bL9 family.</text>
</comment>
<gene>
    <name type="primary">rplI</name>
    <name type="ordered locus">DR_0102</name>
</gene>
<feature type="chain" id="PRO_0000176635" description="Large ribosomal subunit protein bL9">
    <location>
        <begin position="1"/>
        <end position="146"/>
    </location>
</feature>
<protein>
    <recommendedName>
        <fullName evidence="7">Large ribosomal subunit protein bL9</fullName>
    </recommendedName>
    <alternativeName>
        <fullName>50S ribosomal protein L9</fullName>
    </alternativeName>
</protein>
<keyword id="KW-0002">3D-structure</keyword>
<keyword id="KW-0903">Direct protein sequencing</keyword>
<keyword id="KW-1185">Reference proteome</keyword>
<keyword id="KW-0687">Ribonucleoprotein</keyword>
<keyword id="KW-0689">Ribosomal protein</keyword>
<keyword id="KW-0694">RNA-binding</keyword>
<keyword id="KW-0699">rRNA-binding</keyword>